<dbReference type="EC" id="7.1.1.-" evidence="1"/>
<dbReference type="EMBL" id="CP000485">
    <property type="protein sequence ID" value="ABK87980.1"/>
    <property type="molecule type" value="Genomic_DNA"/>
</dbReference>
<dbReference type="RefSeq" id="WP_000573430.1">
    <property type="nucleotide sequence ID" value="NC_008600.1"/>
</dbReference>
<dbReference type="SMR" id="A0RL87"/>
<dbReference type="GeneID" id="93005827"/>
<dbReference type="KEGG" id="btl:BALH_4799"/>
<dbReference type="HOGENOM" id="CLU_015134_0_1_9"/>
<dbReference type="GO" id="GO:0005886">
    <property type="term" value="C:plasma membrane"/>
    <property type="evidence" value="ECO:0007669"/>
    <property type="project" value="UniProtKB-SubCell"/>
</dbReference>
<dbReference type="GO" id="GO:0003954">
    <property type="term" value="F:NADH dehydrogenase activity"/>
    <property type="evidence" value="ECO:0007669"/>
    <property type="project" value="TreeGrafter"/>
</dbReference>
<dbReference type="GO" id="GO:0016655">
    <property type="term" value="F:oxidoreductase activity, acting on NAD(P)H, quinone or similar compound as acceptor"/>
    <property type="evidence" value="ECO:0007669"/>
    <property type="project" value="UniProtKB-UniRule"/>
</dbReference>
<dbReference type="GO" id="GO:0048038">
    <property type="term" value="F:quinone binding"/>
    <property type="evidence" value="ECO:0007669"/>
    <property type="project" value="UniProtKB-KW"/>
</dbReference>
<dbReference type="GO" id="GO:0009060">
    <property type="term" value="P:aerobic respiration"/>
    <property type="evidence" value="ECO:0007669"/>
    <property type="project" value="TreeGrafter"/>
</dbReference>
<dbReference type="HAMAP" id="MF_01350">
    <property type="entry name" value="NDH1_NuoH"/>
    <property type="match status" value="1"/>
</dbReference>
<dbReference type="InterPro" id="IPR001694">
    <property type="entry name" value="NADH_UbQ_OxRdtase_su1/FPO"/>
</dbReference>
<dbReference type="InterPro" id="IPR018086">
    <property type="entry name" value="NADH_UbQ_OxRdtase_su1_CS"/>
</dbReference>
<dbReference type="NCBIfam" id="NF004741">
    <property type="entry name" value="PRK06076.1-2"/>
    <property type="match status" value="1"/>
</dbReference>
<dbReference type="PANTHER" id="PTHR11432">
    <property type="entry name" value="NADH DEHYDROGENASE SUBUNIT 1"/>
    <property type="match status" value="1"/>
</dbReference>
<dbReference type="PANTHER" id="PTHR11432:SF3">
    <property type="entry name" value="NADH-UBIQUINONE OXIDOREDUCTASE CHAIN 1"/>
    <property type="match status" value="1"/>
</dbReference>
<dbReference type="Pfam" id="PF00146">
    <property type="entry name" value="NADHdh"/>
    <property type="match status" value="1"/>
</dbReference>
<dbReference type="PROSITE" id="PS00668">
    <property type="entry name" value="COMPLEX1_ND1_2"/>
    <property type="match status" value="1"/>
</dbReference>
<reference key="1">
    <citation type="journal article" date="2007" name="J. Bacteriol.">
        <title>The complete genome sequence of Bacillus thuringiensis Al Hakam.</title>
        <authorList>
            <person name="Challacombe J.F."/>
            <person name="Altherr M.R."/>
            <person name="Xie G."/>
            <person name="Bhotika S.S."/>
            <person name="Brown N."/>
            <person name="Bruce D."/>
            <person name="Campbell C.S."/>
            <person name="Campbell M.L."/>
            <person name="Chen J."/>
            <person name="Chertkov O."/>
            <person name="Cleland C."/>
            <person name="Dimitrijevic M."/>
            <person name="Doggett N.A."/>
            <person name="Fawcett J.J."/>
            <person name="Glavina T."/>
            <person name="Goodwin L.A."/>
            <person name="Green L.D."/>
            <person name="Han C.S."/>
            <person name="Hill K.K."/>
            <person name="Hitchcock P."/>
            <person name="Jackson P.J."/>
            <person name="Keim P."/>
            <person name="Kewalramani A.R."/>
            <person name="Longmire J."/>
            <person name="Lucas S."/>
            <person name="Malfatti S."/>
            <person name="Martinez D."/>
            <person name="McMurry K."/>
            <person name="Meincke L.J."/>
            <person name="Misra M."/>
            <person name="Moseman B.L."/>
            <person name="Mundt M."/>
            <person name="Munk A.C."/>
            <person name="Okinaka R.T."/>
            <person name="Parson-Quintana B."/>
            <person name="Reilly L.P."/>
            <person name="Richardson P."/>
            <person name="Robinson D.L."/>
            <person name="Saunders E."/>
            <person name="Tapia R."/>
            <person name="Tesmer J.G."/>
            <person name="Thayer N."/>
            <person name="Thompson L.S."/>
            <person name="Tice H."/>
            <person name="Ticknor L.O."/>
            <person name="Wills P.L."/>
            <person name="Gilna P."/>
            <person name="Brettin T.S."/>
        </authorList>
    </citation>
    <scope>NUCLEOTIDE SEQUENCE [LARGE SCALE GENOMIC DNA]</scope>
    <source>
        <strain>Al Hakam</strain>
    </source>
</reference>
<sequence length="333" mass="36895">MIETLLQSPSSWTNFFIFFGLAVLLLFAVLGFVTYGILAERKVMGFMQGRIGPNQVGGRFGLLQTVADVLKLLLKEDSIPKAADKPLFILAPVIAFAPAFMVLAVIPFTDKFQFADIGVGLLYYIAVSGITTIGVVTGGWASNNKYSLLGGMRAAAQMISYEIPLVMSVIGIVLLAGSLNLNEIVAAQENVWYIFVQPIGFVVFLIAAVAELNRTPFDLPEAESELVSGYHTEYSGFRWAFFMLSEYVYFFGMASLITVLFLGGWNPVMFLGFIPGAVWFALKFSSVVFLLIWFRVTFPRIRGDQLMEFGWKVLLPIALANIFLTALIKELFF</sequence>
<organism>
    <name type="scientific">Bacillus thuringiensis (strain Al Hakam)</name>
    <dbReference type="NCBI Taxonomy" id="412694"/>
    <lineage>
        <taxon>Bacteria</taxon>
        <taxon>Bacillati</taxon>
        <taxon>Bacillota</taxon>
        <taxon>Bacilli</taxon>
        <taxon>Bacillales</taxon>
        <taxon>Bacillaceae</taxon>
        <taxon>Bacillus</taxon>
        <taxon>Bacillus cereus group</taxon>
    </lineage>
</organism>
<accession>A0RL87</accession>
<keyword id="KW-1003">Cell membrane</keyword>
<keyword id="KW-0472">Membrane</keyword>
<keyword id="KW-0520">NAD</keyword>
<keyword id="KW-0874">Quinone</keyword>
<keyword id="KW-1278">Translocase</keyword>
<keyword id="KW-0812">Transmembrane</keyword>
<keyword id="KW-1133">Transmembrane helix</keyword>
<keyword id="KW-0830">Ubiquinone</keyword>
<feature type="chain" id="PRO_0000298793" description="NADH-quinone oxidoreductase subunit H">
    <location>
        <begin position="1"/>
        <end position="333"/>
    </location>
</feature>
<feature type="transmembrane region" description="Helical" evidence="1">
    <location>
        <begin position="15"/>
        <end position="35"/>
    </location>
</feature>
<feature type="transmembrane region" description="Helical" evidence="1">
    <location>
        <begin position="88"/>
        <end position="108"/>
    </location>
</feature>
<feature type="transmembrane region" description="Helical" evidence="1">
    <location>
        <begin position="117"/>
        <end position="137"/>
    </location>
</feature>
<feature type="transmembrane region" description="Helical" evidence="1">
    <location>
        <begin position="159"/>
        <end position="179"/>
    </location>
</feature>
<feature type="transmembrane region" description="Helical" evidence="1">
    <location>
        <begin position="191"/>
        <end position="211"/>
    </location>
</feature>
<feature type="transmembrane region" description="Helical" evidence="1">
    <location>
        <begin position="239"/>
        <end position="259"/>
    </location>
</feature>
<feature type="transmembrane region" description="Helical" evidence="1">
    <location>
        <begin position="274"/>
        <end position="296"/>
    </location>
</feature>
<feature type="transmembrane region" description="Helical" evidence="1">
    <location>
        <begin position="313"/>
        <end position="333"/>
    </location>
</feature>
<gene>
    <name evidence="1" type="primary">nuoH</name>
    <name type="ordered locus">BALH_4799</name>
</gene>
<name>NUOH_BACAH</name>
<protein>
    <recommendedName>
        <fullName evidence="1">NADH-quinone oxidoreductase subunit H</fullName>
        <ecNumber evidence="1">7.1.1.-</ecNumber>
    </recommendedName>
    <alternativeName>
        <fullName evidence="1">NADH dehydrogenase I subunit H</fullName>
    </alternativeName>
    <alternativeName>
        <fullName evidence="1">NDH-1 subunit H</fullName>
    </alternativeName>
</protein>
<comment type="function">
    <text evidence="1">NDH-1 shuttles electrons from NADH, via FMN and iron-sulfur (Fe-S) centers, to quinones in the respiratory chain. The immediate electron acceptor for the enzyme in this species is believed to be ubiquinone. Couples the redox reaction to proton translocation (for every two electrons transferred, four hydrogen ions are translocated across the cytoplasmic membrane), and thus conserves the redox energy in a proton gradient. This subunit may bind ubiquinone.</text>
</comment>
<comment type="catalytic activity">
    <reaction evidence="1">
        <text>a quinone + NADH + 5 H(+)(in) = a quinol + NAD(+) + 4 H(+)(out)</text>
        <dbReference type="Rhea" id="RHEA:57888"/>
        <dbReference type="ChEBI" id="CHEBI:15378"/>
        <dbReference type="ChEBI" id="CHEBI:24646"/>
        <dbReference type="ChEBI" id="CHEBI:57540"/>
        <dbReference type="ChEBI" id="CHEBI:57945"/>
        <dbReference type="ChEBI" id="CHEBI:132124"/>
    </reaction>
</comment>
<comment type="subunit">
    <text evidence="1">NDH-1 is composed of 14 different subunits. Subunits NuoA, H, J, K, L, M, N constitute the membrane sector of the complex.</text>
</comment>
<comment type="subcellular location">
    <subcellularLocation>
        <location evidence="1">Cell membrane</location>
        <topology evidence="1">Multi-pass membrane protein</topology>
    </subcellularLocation>
</comment>
<comment type="similarity">
    <text evidence="1">Belongs to the complex I subunit 1 family.</text>
</comment>
<proteinExistence type="inferred from homology"/>
<evidence type="ECO:0000255" key="1">
    <source>
        <dbReference type="HAMAP-Rule" id="MF_01350"/>
    </source>
</evidence>